<evidence type="ECO:0000255" key="1">
    <source>
        <dbReference type="HAMAP-Rule" id="MF_00546"/>
    </source>
</evidence>
<evidence type="ECO:0000256" key="2">
    <source>
        <dbReference type="SAM" id="MobiDB-lite"/>
    </source>
</evidence>
<evidence type="ECO:0000305" key="3"/>
<protein>
    <recommendedName>
        <fullName evidence="1">Acid shock protein</fullName>
    </recommendedName>
</protein>
<gene>
    <name evidence="1" type="primary">asr</name>
    <name type="ordered locus">SF1618</name>
    <name type="ordered locus">S1750</name>
</gene>
<feature type="signal peptide" evidence="1">
    <location>
        <begin position="1"/>
        <end position="21"/>
    </location>
</feature>
<feature type="propeptide" id="PRO_0000269510" evidence="1">
    <location>
        <begin position="22"/>
        <end position="58"/>
    </location>
</feature>
<feature type="chain" id="PRO_0000002409" description="Acid shock protein">
    <location>
        <begin position="59"/>
        <end position="102"/>
    </location>
</feature>
<feature type="region of interest" description="Disordered" evidence="2">
    <location>
        <begin position="22"/>
        <end position="102"/>
    </location>
</feature>
<feature type="compositionally biased region" description="Low complexity" evidence="2">
    <location>
        <begin position="22"/>
        <end position="41"/>
    </location>
</feature>
<feature type="compositionally biased region" description="Basic residues" evidence="2">
    <location>
        <begin position="80"/>
        <end position="90"/>
    </location>
</feature>
<feature type="compositionally biased region" description="Low complexity" evidence="2">
    <location>
        <begin position="91"/>
        <end position="102"/>
    </location>
</feature>
<keyword id="KW-0574">Periplasm</keyword>
<keyword id="KW-1185">Reference proteome</keyword>
<keyword id="KW-0732">Signal</keyword>
<dbReference type="EMBL" id="AE005674">
    <property type="protein sequence ID" value="AAN43201.1"/>
    <property type="status" value="ALT_INIT"/>
    <property type="molecule type" value="Genomic_DNA"/>
</dbReference>
<dbReference type="EMBL" id="AE014073">
    <property type="protein sequence ID" value="AAP17089.1"/>
    <property type="status" value="ALT_INIT"/>
    <property type="molecule type" value="Genomic_DNA"/>
</dbReference>
<dbReference type="RefSeq" id="NP_707494.3">
    <property type="nucleotide sequence ID" value="NC_004337.2"/>
</dbReference>
<dbReference type="PaxDb" id="198214-SF1618"/>
<dbReference type="GeneID" id="1024808"/>
<dbReference type="KEGG" id="sfl:SF1618"/>
<dbReference type="KEGG" id="sfx:S1750"/>
<dbReference type="PATRIC" id="fig|198214.7.peg.1912"/>
<dbReference type="HOGENOM" id="CLU_102486_2_0_6"/>
<dbReference type="Proteomes" id="UP000001006">
    <property type="component" value="Chromosome"/>
</dbReference>
<dbReference type="Proteomes" id="UP000002673">
    <property type="component" value="Chromosome"/>
</dbReference>
<dbReference type="GO" id="GO:0042597">
    <property type="term" value="C:periplasmic space"/>
    <property type="evidence" value="ECO:0007669"/>
    <property type="project" value="UniProtKB-SubCell"/>
</dbReference>
<dbReference type="HAMAP" id="MF_00546">
    <property type="entry name" value="Asr"/>
    <property type="match status" value="1"/>
</dbReference>
<dbReference type="InterPro" id="IPR023497">
    <property type="entry name" value="Acid_shock"/>
</dbReference>
<dbReference type="NCBIfam" id="NF033636">
    <property type="entry name" value="acid_shock_Asr"/>
    <property type="match status" value="1"/>
</dbReference>
<dbReference type="Pfam" id="PF06392">
    <property type="entry name" value="Asr"/>
    <property type="match status" value="1"/>
</dbReference>
<proteinExistence type="inferred from homology"/>
<sequence length="102" mass="10460">MKKVLALVVAAAMGLSSAAFAAETATTPAPTATTTKAAPAKTTHHKKQHKAAPAQKAQAAKKHHKNTKAEQKAPEQKAQAAKKHAGKHGHQQPAKPAAQPAA</sequence>
<organism>
    <name type="scientific">Shigella flexneri</name>
    <dbReference type="NCBI Taxonomy" id="623"/>
    <lineage>
        <taxon>Bacteria</taxon>
        <taxon>Pseudomonadati</taxon>
        <taxon>Pseudomonadota</taxon>
        <taxon>Gammaproteobacteria</taxon>
        <taxon>Enterobacterales</taxon>
        <taxon>Enterobacteriaceae</taxon>
        <taxon>Shigella</taxon>
    </lineage>
</organism>
<reference key="1">
    <citation type="journal article" date="2002" name="Nucleic Acids Res.">
        <title>Genome sequence of Shigella flexneri 2a: insights into pathogenicity through comparison with genomes of Escherichia coli K12 and O157.</title>
        <authorList>
            <person name="Jin Q."/>
            <person name="Yuan Z."/>
            <person name="Xu J."/>
            <person name="Wang Y."/>
            <person name="Shen Y."/>
            <person name="Lu W."/>
            <person name="Wang J."/>
            <person name="Liu H."/>
            <person name="Yang J."/>
            <person name="Yang F."/>
            <person name="Zhang X."/>
            <person name="Zhang J."/>
            <person name="Yang G."/>
            <person name="Wu H."/>
            <person name="Qu D."/>
            <person name="Dong J."/>
            <person name="Sun L."/>
            <person name="Xue Y."/>
            <person name="Zhao A."/>
            <person name="Gao Y."/>
            <person name="Zhu J."/>
            <person name="Kan B."/>
            <person name="Ding K."/>
            <person name="Chen S."/>
            <person name="Cheng H."/>
            <person name="Yao Z."/>
            <person name="He B."/>
            <person name="Chen R."/>
            <person name="Ma D."/>
            <person name="Qiang B."/>
            <person name="Wen Y."/>
            <person name="Hou Y."/>
            <person name="Yu J."/>
        </authorList>
    </citation>
    <scope>NUCLEOTIDE SEQUENCE [LARGE SCALE GENOMIC DNA]</scope>
    <source>
        <strain>301 / Serotype 2a</strain>
    </source>
</reference>
<reference key="2">
    <citation type="journal article" date="2003" name="Infect. Immun.">
        <title>Complete genome sequence and comparative genomics of Shigella flexneri serotype 2a strain 2457T.</title>
        <authorList>
            <person name="Wei J."/>
            <person name="Goldberg M.B."/>
            <person name="Burland V."/>
            <person name="Venkatesan M.M."/>
            <person name="Deng W."/>
            <person name="Fournier G."/>
            <person name="Mayhew G.F."/>
            <person name="Plunkett G. III"/>
            <person name="Rose D.J."/>
            <person name="Darling A."/>
            <person name="Mau B."/>
            <person name="Perna N.T."/>
            <person name="Payne S.M."/>
            <person name="Runyen-Janecky L.J."/>
            <person name="Zhou S."/>
            <person name="Schwartz D.C."/>
            <person name="Blattner F.R."/>
        </authorList>
    </citation>
    <scope>NUCLEOTIDE SEQUENCE [LARGE SCALE GENOMIC DNA]</scope>
    <source>
        <strain>ATCC 700930 / 2457T / Serotype 2a</strain>
    </source>
</reference>
<accession>Q83RD2</accession>
<comment type="function">
    <text evidence="1">Required for growth and/or survival at acidic conditions.</text>
</comment>
<comment type="subcellular location">
    <subcellularLocation>
        <location evidence="1">Periplasm</location>
    </subcellularLocation>
</comment>
<comment type="PTM">
    <text evidence="1">Proteolytic processing gives rise to the active protein.</text>
</comment>
<comment type="similarity">
    <text evidence="1">Belongs to the Asr family.</text>
</comment>
<comment type="sequence caution" evidence="3">
    <conflict type="erroneous initiation">
        <sequence resource="EMBL-CDS" id="AAN43201"/>
    </conflict>
</comment>
<comment type="sequence caution" evidence="3">
    <conflict type="erroneous initiation">
        <sequence resource="EMBL-CDS" id="AAP17089"/>
    </conflict>
</comment>
<name>ASR_SHIFL</name>